<keyword id="KW-0648">Protein biosynthesis</keyword>
<keyword id="KW-1185">Reference proteome</keyword>
<keyword id="KW-0808">Transferase</keyword>
<feature type="chain" id="PRO_1000020071" description="Methionyl-tRNA formyltransferase">
    <location>
        <begin position="1"/>
        <end position="310"/>
    </location>
</feature>
<feature type="binding site" evidence="1">
    <location>
        <begin position="114"/>
        <end position="117"/>
    </location>
    <ligand>
        <name>(6S)-5,6,7,8-tetrahydrofolate</name>
        <dbReference type="ChEBI" id="CHEBI:57453"/>
    </ligand>
</feature>
<protein>
    <recommendedName>
        <fullName evidence="1">Methionyl-tRNA formyltransferase</fullName>
        <ecNumber evidence="1">2.1.2.9</ecNumber>
    </recommendedName>
</protein>
<comment type="function">
    <text evidence="1">Attaches a formyl group to the free amino group of methionyl-tRNA(fMet). The formyl group appears to play a dual role in the initiator identity of N-formylmethionyl-tRNA by promoting its recognition by IF2 and preventing the misappropriation of this tRNA by the elongation apparatus.</text>
</comment>
<comment type="catalytic activity">
    <reaction evidence="1">
        <text>L-methionyl-tRNA(fMet) + (6R)-10-formyltetrahydrofolate = N-formyl-L-methionyl-tRNA(fMet) + (6S)-5,6,7,8-tetrahydrofolate + H(+)</text>
        <dbReference type="Rhea" id="RHEA:24380"/>
        <dbReference type="Rhea" id="RHEA-COMP:9952"/>
        <dbReference type="Rhea" id="RHEA-COMP:9953"/>
        <dbReference type="ChEBI" id="CHEBI:15378"/>
        <dbReference type="ChEBI" id="CHEBI:57453"/>
        <dbReference type="ChEBI" id="CHEBI:78530"/>
        <dbReference type="ChEBI" id="CHEBI:78844"/>
        <dbReference type="ChEBI" id="CHEBI:195366"/>
        <dbReference type="EC" id="2.1.2.9"/>
    </reaction>
</comment>
<comment type="similarity">
    <text evidence="1">Belongs to the Fmt family.</text>
</comment>
<gene>
    <name evidence="1" type="primary">fmt</name>
    <name type="ordered locus">GbCGDNIH1_0691</name>
</gene>
<sequence length="310" mass="32756">MAERLTLAFMGSPDFSVPALHALHQAGHHIAAVYTQPPRPAGRGHRLTPCPVHRAAEALGLEVRHPALLKNAADEHEAFRALNLDAAVVAAYGLILPRVMLDTPQRGCLNIHASLLPRWRGASPIQNAILAGDTESGVTIMRMEEGLDTGPMLLKRAVPITETTTTPELHDALATAGAEAILHVLETQPDGENQDDALACYAPKLSRADGLLDWSQPAALLARRVRALNPWPGTFSGSLKILAAHAVTEASGIPGTVIGIGDDTLLIACGDGALCLDKVQKPGRPALDAAAFLRGHKLPAGTRLDEHGFS</sequence>
<accession>Q0BUB3</accession>
<organism>
    <name type="scientific">Granulibacter bethesdensis (strain ATCC BAA-1260 / CGDNIH1)</name>
    <dbReference type="NCBI Taxonomy" id="391165"/>
    <lineage>
        <taxon>Bacteria</taxon>
        <taxon>Pseudomonadati</taxon>
        <taxon>Pseudomonadota</taxon>
        <taxon>Alphaproteobacteria</taxon>
        <taxon>Acetobacterales</taxon>
        <taxon>Acetobacteraceae</taxon>
        <taxon>Granulibacter</taxon>
    </lineage>
</organism>
<name>FMT_GRABC</name>
<evidence type="ECO:0000255" key="1">
    <source>
        <dbReference type="HAMAP-Rule" id="MF_00182"/>
    </source>
</evidence>
<proteinExistence type="inferred from homology"/>
<dbReference type="EC" id="2.1.2.9" evidence="1"/>
<dbReference type="EMBL" id="CP000394">
    <property type="protein sequence ID" value="ABI61589.1"/>
    <property type="molecule type" value="Genomic_DNA"/>
</dbReference>
<dbReference type="RefSeq" id="WP_011631398.1">
    <property type="nucleotide sequence ID" value="NC_008343.2"/>
</dbReference>
<dbReference type="SMR" id="Q0BUB3"/>
<dbReference type="STRING" id="391165.GbCGDNIH1_0691"/>
<dbReference type="KEGG" id="gbe:GbCGDNIH1_0691"/>
<dbReference type="eggNOG" id="COG0223">
    <property type="taxonomic scope" value="Bacteria"/>
</dbReference>
<dbReference type="HOGENOM" id="CLU_033347_1_2_5"/>
<dbReference type="Proteomes" id="UP000001963">
    <property type="component" value="Chromosome"/>
</dbReference>
<dbReference type="GO" id="GO:0005829">
    <property type="term" value="C:cytosol"/>
    <property type="evidence" value="ECO:0007669"/>
    <property type="project" value="TreeGrafter"/>
</dbReference>
<dbReference type="GO" id="GO:0004479">
    <property type="term" value="F:methionyl-tRNA formyltransferase activity"/>
    <property type="evidence" value="ECO:0007669"/>
    <property type="project" value="UniProtKB-UniRule"/>
</dbReference>
<dbReference type="CDD" id="cd08646">
    <property type="entry name" value="FMT_core_Met-tRNA-FMT_N"/>
    <property type="match status" value="1"/>
</dbReference>
<dbReference type="CDD" id="cd08704">
    <property type="entry name" value="Met_tRNA_FMT_C"/>
    <property type="match status" value="1"/>
</dbReference>
<dbReference type="Gene3D" id="3.10.25.10">
    <property type="entry name" value="Formyl transferase, C-terminal domain"/>
    <property type="match status" value="1"/>
</dbReference>
<dbReference type="Gene3D" id="3.40.50.170">
    <property type="entry name" value="Formyl transferase, N-terminal domain"/>
    <property type="match status" value="1"/>
</dbReference>
<dbReference type="HAMAP" id="MF_00182">
    <property type="entry name" value="Formyl_trans"/>
    <property type="match status" value="1"/>
</dbReference>
<dbReference type="InterPro" id="IPR005794">
    <property type="entry name" value="Fmt"/>
</dbReference>
<dbReference type="InterPro" id="IPR005793">
    <property type="entry name" value="Formyl_trans_C"/>
</dbReference>
<dbReference type="InterPro" id="IPR037022">
    <property type="entry name" value="Formyl_trans_C_sf"/>
</dbReference>
<dbReference type="InterPro" id="IPR002376">
    <property type="entry name" value="Formyl_transf_N"/>
</dbReference>
<dbReference type="InterPro" id="IPR036477">
    <property type="entry name" value="Formyl_transf_N_sf"/>
</dbReference>
<dbReference type="InterPro" id="IPR011034">
    <property type="entry name" value="Formyl_transferase-like_C_sf"/>
</dbReference>
<dbReference type="InterPro" id="IPR001555">
    <property type="entry name" value="GART_AS"/>
</dbReference>
<dbReference type="InterPro" id="IPR044135">
    <property type="entry name" value="Met-tRNA-FMT_C"/>
</dbReference>
<dbReference type="InterPro" id="IPR041711">
    <property type="entry name" value="Met-tRNA-FMT_N"/>
</dbReference>
<dbReference type="NCBIfam" id="TIGR00460">
    <property type="entry name" value="fmt"/>
    <property type="match status" value="1"/>
</dbReference>
<dbReference type="PANTHER" id="PTHR11138">
    <property type="entry name" value="METHIONYL-TRNA FORMYLTRANSFERASE"/>
    <property type="match status" value="1"/>
</dbReference>
<dbReference type="PANTHER" id="PTHR11138:SF5">
    <property type="entry name" value="METHIONYL-TRNA FORMYLTRANSFERASE, MITOCHONDRIAL"/>
    <property type="match status" value="1"/>
</dbReference>
<dbReference type="Pfam" id="PF02911">
    <property type="entry name" value="Formyl_trans_C"/>
    <property type="match status" value="1"/>
</dbReference>
<dbReference type="Pfam" id="PF00551">
    <property type="entry name" value="Formyl_trans_N"/>
    <property type="match status" value="1"/>
</dbReference>
<dbReference type="SUPFAM" id="SSF50486">
    <property type="entry name" value="FMT C-terminal domain-like"/>
    <property type="match status" value="1"/>
</dbReference>
<dbReference type="SUPFAM" id="SSF53328">
    <property type="entry name" value="Formyltransferase"/>
    <property type="match status" value="1"/>
</dbReference>
<dbReference type="PROSITE" id="PS00373">
    <property type="entry name" value="GART"/>
    <property type="match status" value="1"/>
</dbReference>
<reference key="1">
    <citation type="journal article" date="2007" name="J. Bacteriol.">
        <title>Genome sequence analysis of the emerging human pathogenic acetic acid bacterium Granulibacter bethesdensis.</title>
        <authorList>
            <person name="Greenberg D.E."/>
            <person name="Porcella S.F."/>
            <person name="Zelazny A.M."/>
            <person name="Virtaneva K."/>
            <person name="Sturdevant D.E."/>
            <person name="Kupko J.J. III"/>
            <person name="Barbian K.D."/>
            <person name="Babar A."/>
            <person name="Dorward D.W."/>
            <person name="Holland S.M."/>
        </authorList>
    </citation>
    <scope>NUCLEOTIDE SEQUENCE [LARGE SCALE GENOMIC DNA]</scope>
    <source>
        <strain>ATCC BAA-1260 / CGDNIH1</strain>
    </source>
</reference>